<organism>
    <name type="scientific">Rattus norvegicus</name>
    <name type="common">Rat</name>
    <dbReference type="NCBI Taxonomy" id="10116"/>
    <lineage>
        <taxon>Eukaryota</taxon>
        <taxon>Metazoa</taxon>
        <taxon>Chordata</taxon>
        <taxon>Craniata</taxon>
        <taxon>Vertebrata</taxon>
        <taxon>Euteleostomi</taxon>
        <taxon>Mammalia</taxon>
        <taxon>Eutheria</taxon>
        <taxon>Euarchontoglires</taxon>
        <taxon>Glires</taxon>
        <taxon>Rodentia</taxon>
        <taxon>Myomorpha</taxon>
        <taxon>Muroidea</taxon>
        <taxon>Muridae</taxon>
        <taxon>Murinae</taxon>
        <taxon>Rattus</taxon>
    </lineage>
</organism>
<gene>
    <name type="primary">Fxyd7</name>
</gene>
<sequence>MATPTQSPTNVPEETDPFFYDYATVQTVGMTLATIMFVLGIIIIISKKVKCRKADSRSESPTCKSCKSELPSSAPGGGGV</sequence>
<feature type="chain" id="PRO_0000148192" description="FXYD domain-containing ion transport regulator 7">
    <location>
        <begin position="1"/>
        <end position="80"/>
    </location>
</feature>
<feature type="topological domain" description="Extracellular" evidence="5">
    <location>
        <begin position="1"/>
        <end position="22"/>
    </location>
</feature>
<feature type="transmembrane region" description="Helical" evidence="3">
    <location>
        <begin position="23"/>
        <end position="45"/>
    </location>
</feature>
<feature type="topological domain" description="Cytoplasmic" evidence="7">
    <location>
        <begin position="46"/>
        <end position="80"/>
    </location>
</feature>
<feature type="region of interest" description="Disordered" evidence="4">
    <location>
        <begin position="56"/>
        <end position="80"/>
    </location>
</feature>
<feature type="modified residue" description="Phosphoserine" evidence="8">
    <location>
        <position position="73"/>
    </location>
</feature>
<feature type="glycosylation site" description="O-linked (GlcNAc) threonine" evidence="2">
    <location>
        <position position="3"/>
    </location>
</feature>
<feature type="glycosylation site" description="O-linked (GlcNAc) threonine" evidence="2">
    <location>
        <position position="5"/>
    </location>
</feature>
<feature type="glycosylation site" description="O-linked (GlcNAc) threonine" evidence="2">
    <location>
        <position position="9"/>
    </location>
</feature>
<feature type="mutagenesis site" description="Inhibits cell surface expression. Inhibits cell surface expression; when associated with A-5. Inhibits cell surface expression; when associated with A-5 and A-9." evidence="6">
    <original>T</original>
    <variation>A</variation>
    <location>
        <position position="3"/>
    </location>
</feature>
<feature type="mutagenesis site" description="Inhibits cell surface expression. Inhibits cell surface expression; when associated with A-3. Inhibits cell surface expression; when associated with A-3 and A-9." evidence="6">
    <original>T</original>
    <variation>A</variation>
    <location>
        <position position="5"/>
    </location>
</feature>
<feature type="mutagenesis site" description="Does not inhibit cell surface expression. Inhibits cell surface expression; when associated with A-3 and A-9." evidence="6">
    <original>T</original>
    <variation>A</variation>
    <location>
        <position position="9"/>
    </location>
</feature>
<proteinExistence type="evidence at protein level"/>
<keyword id="KW-1003">Cell membrane</keyword>
<keyword id="KW-0903">Direct protein sequencing</keyword>
<keyword id="KW-0325">Glycoprotein</keyword>
<keyword id="KW-0406">Ion transport</keyword>
<keyword id="KW-0472">Membrane</keyword>
<keyword id="KW-0597">Phosphoprotein</keyword>
<keyword id="KW-0630">Potassium</keyword>
<keyword id="KW-0633">Potassium transport</keyword>
<keyword id="KW-1185">Reference proteome</keyword>
<keyword id="KW-0915">Sodium</keyword>
<keyword id="KW-0739">Sodium transport</keyword>
<keyword id="KW-0740">Sodium/potassium transport</keyword>
<keyword id="KW-0812">Transmembrane</keyword>
<keyword id="KW-1133">Transmembrane helix</keyword>
<keyword id="KW-0813">Transport</keyword>
<accession>P59649</accession>
<evidence type="ECO:0000250" key="1">
    <source>
        <dbReference type="UniProtKB" id="P58549"/>
    </source>
</evidence>
<evidence type="ECO:0000250" key="2">
    <source>
        <dbReference type="UniProtKB" id="P59648"/>
    </source>
</evidence>
<evidence type="ECO:0000255" key="3"/>
<evidence type="ECO:0000256" key="4">
    <source>
        <dbReference type="SAM" id="MobiDB-lite"/>
    </source>
</evidence>
<evidence type="ECO:0000269" key="5">
    <source>
    </source>
</evidence>
<evidence type="ECO:0000269" key="6">
    <source>
    </source>
</evidence>
<evidence type="ECO:0000305" key="7"/>
<evidence type="ECO:0007744" key="8">
    <source>
    </source>
</evidence>
<name>FXYD7_RAT</name>
<comment type="function">
    <text evidence="1 2">Associates with and regulates the activity of the sodium/potassium-transporting ATPase (NKA) which catalyzes the hydrolysis of ATP coupled with the exchange of Na(+) and K(+) ions across the plasma membrane (By similarity). Reduces the apparent affinity for external K(+), an effect that depends on the presence of external Na(+) and voltage (By similarity). Increases the apparent affinity for intracellular Na(+) (By similarity).</text>
</comment>
<comment type="subunit">
    <text evidence="2">Regulatory subunit of the sodium/potassium-transporting ATPase which is composed of a catalytic alpha subunit, a non-catalytic beta subunit and an additional regulatory subunit. The regulatory subunit, a member of the FXYD protein family, modulates the enzymatic activity in a tissue- and isoform-specific way by changing affinities of the Na+/K+-ATPase toward Na(+), K(+) or ATP.</text>
</comment>
<comment type="subcellular location">
    <subcellularLocation>
        <location evidence="6">Cell membrane</location>
        <topology evidence="2">Single-pass type I membrane protein</topology>
    </subcellularLocation>
    <text evidence="2 6">Able to translocate to the plasma membrane of Xenopus oocytes independent of its association with NKA (PubMed:22535957). Lacks a cleavable signal sequence (By similarity).</text>
</comment>
<comment type="tissue specificity">
    <text evidence="5">Expressed specifically in brain. Expressed in both neurons and glia.</text>
</comment>
<comment type="domain">
    <text evidence="2">The transmembrane domain is important for the interaction with NKA and with the functional effect of FXYD7.</text>
</comment>
<comment type="PTM">
    <text evidence="6">O-glycosylated; required for stabilization and translocation to the plasma membrane.</text>
</comment>
<comment type="similarity">
    <text evidence="7">Belongs to the FXYD family.</text>
</comment>
<dbReference type="EMBL" id="AW914994">
    <property type="status" value="NOT_ANNOTATED_CDS"/>
    <property type="molecule type" value="mRNA"/>
</dbReference>
<dbReference type="RefSeq" id="NP_071291.1">
    <property type="nucleotide sequence ID" value="NM_022008.1"/>
</dbReference>
<dbReference type="SMR" id="P59649"/>
<dbReference type="FunCoup" id="P59649">
    <property type="interactions" value="179"/>
</dbReference>
<dbReference type="STRING" id="10116.ENSRNOP00000028603"/>
<dbReference type="GlyGen" id="P59649">
    <property type="glycosylation" value="3 sites"/>
</dbReference>
<dbReference type="iPTMnet" id="P59649"/>
<dbReference type="PhosphoSitePlus" id="P59649"/>
<dbReference type="SwissPalm" id="P59649"/>
<dbReference type="PaxDb" id="10116-ENSRNOP00000028603"/>
<dbReference type="GeneID" id="63848"/>
<dbReference type="KEGG" id="rno:63848"/>
<dbReference type="UCSC" id="RGD:620830">
    <property type="organism name" value="rat"/>
</dbReference>
<dbReference type="AGR" id="RGD:620830"/>
<dbReference type="CTD" id="53822"/>
<dbReference type="RGD" id="620830">
    <property type="gene designation" value="Fxyd7"/>
</dbReference>
<dbReference type="VEuPathDB" id="HostDB:ENSRNOG00000021067"/>
<dbReference type="eggNOG" id="ENOG502SFZR">
    <property type="taxonomic scope" value="Eukaryota"/>
</dbReference>
<dbReference type="HOGENOM" id="CLU_168385_1_0_1"/>
<dbReference type="InParanoid" id="P59649"/>
<dbReference type="OrthoDB" id="8961850at2759"/>
<dbReference type="PhylomeDB" id="P59649"/>
<dbReference type="TreeFam" id="TF333443"/>
<dbReference type="Reactome" id="R-RNO-5578775">
    <property type="pathway name" value="Ion homeostasis"/>
</dbReference>
<dbReference type="Reactome" id="R-RNO-936837">
    <property type="pathway name" value="Ion transport by P-type ATPases"/>
</dbReference>
<dbReference type="PRO" id="PR:P59649"/>
<dbReference type="Proteomes" id="UP000002494">
    <property type="component" value="Chromosome 1"/>
</dbReference>
<dbReference type="Bgee" id="ENSRNOG00000021067">
    <property type="expression patterns" value="Expressed in cerebellum and 20 other cell types or tissues"/>
</dbReference>
<dbReference type="GO" id="GO:0005886">
    <property type="term" value="C:plasma membrane"/>
    <property type="evidence" value="ECO:0000314"/>
    <property type="project" value="UniProtKB"/>
</dbReference>
<dbReference type="GO" id="GO:0051117">
    <property type="term" value="F:ATPase binding"/>
    <property type="evidence" value="ECO:0000353"/>
    <property type="project" value="RGD"/>
</dbReference>
<dbReference type="GO" id="GO:0017080">
    <property type="term" value="F:sodium channel regulator activity"/>
    <property type="evidence" value="ECO:0000318"/>
    <property type="project" value="GO_Central"/>
</dbReference>
<dbReference type="GO" id="GO:1903278">
    <property type="term" value="P:positive regulation of sodium ion export across plasma membrane"/>
    <property type="evidence" value="ECO:0000318"/>
    <property type="project" value="GO_Central"/>
</dbReference>
<dbReference type="GO" id="GO:0006813">
    <property type="term" value="P:potassium ion transport"/>
    <property type="evidence" value="ECO:0007669"/>
    <property type="project" value="UniProtKB-KW"/>
</dbReference>
<dbReference type="GO" id="GO:0043269">
    <property type="term" value="P:regulation of monoatomic ion transport"/>
    <property type="evidence" value="ECO:0000314"/>
    <property type="project" value="RGD"/>
</dbReference>
<dbReference type="GO" id="GO:0006814">
    <property type="term" value="P:sodium ion transport"/>
    <property type="evidence" value="ECO:0007669"/>
    <property type="project" value="UniProtKB-KW"/>
</dbReference>
<dbReference type="CDD" id="cd20325">
    <property type="entry name" value="FXYD7"/>
    <property type="match status" value="1"/>
</dbReference>
<dbReference type="FunFam" id="1.20.5.780:FF:000003">
    <property type="entry name" value="FXYD domain-containing ion transport regulator"/>
    <property type="match status" value="1"/>
</dbReference>
<dbReference type="Gene3D" id="1.20.5.780">
    <property type="entry name" value="Single helix bin"/>
    <property type="match status" value="1"/>
</dbReference>
<dbReference type="InterPro" id="IPR047284">
    <property type="entry name" value="FXYD7"/>
</dbReference>
<dbReference type="InterPro" id="IPR047297">
    <property type="entry name" value="FXYD_motif"/>
</dbReference>
<dbReference type="InterPro" id="IPR000272">
    <property type="entry name" value="Ion-transport_regulator_FXYD"/>
</dbReference>
<dbReference type="PANTHER" id="PTHR14132:SF1">
    <property type="entry name" value="FXYD DOMAIN-CONTAINING ION TRANSPORT REGULATOR 7"/>
    <property type="match status" value="1"/>
</dbReference>
<dbReference type="PANTHER" id="PTHR14132">
    <property type="entry name" value="SODIUM/POTASSIUM-TRANSPORTING ATPASE SUBUNIT GAMMA"/>
    <property type="match status" value="1"/>
</dbReference>
<dbReference type="Pfam" id="PF02038">
    <property type="entry name" value="ATP1G1_PLM_MAT8"/>
    <property type="match status" value="1"/>
</dbReference>
<dbReference type="PROSITE" id="PS01310">
    <property type="entry name" value="FXYD"/>
    <property type="match status" value="1"/>
</dbReference>
<reference key="1">
    <citation type="submission" date="2000-05" db="EMBL/GenBank/DDBJ databases">
        <authorList>
            <person name="Lee N.H."/>
            <person name="Glodek A."/>
            <person name="Chandra I."/>
            <person name="Mason T.M."/>
            <person name="Quackenbush J."/>
            <person name="Kerlavage A.R."/>
            <person name="Adams M.D."/>
        </authorList>
    </citation>
    <scope>NUCLEOTIDE SEQUENCE [MRNA]</scope>
</reference>
<reference key="2">
    <citation type="submission" date="2007-09" db="UniProtKB">
        <authorList>
            <person name="Lubec G."/>
            <person name="Kang S.U."/>
            <person name="Lubec S."/>
        </authorList>
    </citation>
    <scope>PROTEIN SEQUENCE OF 54-64 AND 68-80</scope>
    <scope>IDENTIFICATION BY MASS SPECTROMETRY</scope>
    <source>
        <strain>Sprague-Dawley</strain>
        <tissue>Brain</tissue>
    </source>
</reference>
<reference key="3">
    <citation type="journal article" date="2000" name="Genomics">
        <title>The FXYD gene family of small ion transport regulators or channels: cDNA sequence, protein signature sequence, and expression.</title>
        <authorList>
            <person name="Sweadner K.J."/>
            <person name="Rael E."/>
        </authorList>
    </citation>
    <scope>RECONSTRUCTION FROM ESTS</scope>
    <scope>CONCEPTUAL TRANSLATION</scope>
</reference>
<reference key="4">
    <citation type="journal article" date="2012" name="Nat. Commun.">
        <title>Quantitative maps of protein phosphorylation sites across 14 different rat organs and tissues.</title>
        <authorList>
            <person name="Lundby A."/>
            <person name="Secher A."/>
            <person name="Lage K."/>
            <person name="Nordsborg N.B."/>
            <person name="Dmytriyev A."/>
            <person name="Lundby C."/>
            <person name="Olsen J.V."/>
        </authorList>
    </citation>
    <scope>PHOSPHORYLATION [LARGE SCALE ANALYSIS] AT SER-73</scope>
    <scope>IDENTIFICATION BY MASS SPECTROMETRY [LARGE SCALE ANALYSIS]</scope>
</reference>
<reference key="5">
    <citation type="journal article" date="2002" name="EMBO J.">
        <title>FXYD7 is a brain-specific regulator of Na,K-ATPase alpha 1-beta isozymes.</title>
        <authorList>
            <person name="Beguin P."/>
            <person name="Crambert G."/>
            <person name="Monnet-Tschudi F."/>
            <person name="Uldry M."/>
            <person name="Horisberger J.D."/>
            <person name="Garty H."/>
            <person name="Geering K."/>
        </authorList>
    </citation>
    <scope>TISSUE SPECIFICITY</scope>
</reference>
<reference key="6">
    <citation type="journal article" date="2012" name="J. Biol. Chem.">
        <title>Intracellular trafficking of FXYD1 (phospholemman) and FXYD7 proteins in Xenopus oocytes and mammalian cells.</title>
        <authorList>
            <person name="Moshitzky S."/>
            <person name="Asher C."/>
            <person name="Garty H."/>
        </authorList>
    </citation>
    <scope>SUBCELLULAR LOCATION</scope>
    <scope>GLYCOSYLATION</scope>
    <scope>MUTAGENESIS OF THR-3; THR-5 AND THR-9</scope>
</reference>
<protein>
    <recommendedName>
        <fullName>FXYD domain-containing ion transport regulator 7</fullName>
    </recommendedName>
</protein>